<organism>
    <name type="scientific">Shewanella denitrificans (strain OS217 / ATCC BAA-1090 / DSM 15013)</name>
    <dbReference type="NCBI Taxonomy" id="318161"/>
    <lineage>
        <taxon>Bacteria</taxon>
        <taxon>Pseudomonadati</taxon>
        <taxon>Pseudomonadota</taxon>
        <taxon>Gammaproteobacteria</taxon>
        <taxon>Alteromonadales</taxon>
        <taxon>Shewanellaceae</taxon>
        <taxon>Shewanella</taxon>
    </lineage>
</organism>
<sequence>MSNIHEHKILILDFGSQYTQLIARRIREIGVYCELWAWDVSEAQIREFNPQGIILAGGPESVTAENSPRAPEYVFNAGVPVLGICYGMQTMSEQLGGKVIQGVGEGEFGYAQVEMLLESALFKGIEDAISPAGRPLLDVWMSHGDKVSAIPEGFKAVAKTDTCPFAAMANEEKRFYGVQFHPEVTHTRQGLRMLEHFAVAICGCGTNWKPSSIIEDAIERIKAQVGDDEVILGLSGGVDSSVVAMLLHRAIGKKLTCVFVDNGLLRLNEAEQVLEMFGDHFGLNIVHVDAENRFLDAMAGVADPEAKRKIIGRVFVEIFDEESKKCANAKWLAQGTIYPDVIESAGSATGKAHVIKSHHNVGGLPDDMEMGLVEPLRELFKDEVRKIGLELGLPYNMLYRHPFPGPGLGVRVLGEVKKEYCDLLRRADAIFIEELHKADLYNKVSQAFTVFLPVRSVGVMGDGRKYDWVVSLRAVETIDFMTAHWAHLPYDFLGRVSNRIINEVDGISRVVYDISGKPPATIEWE</sequence>
<proteinExistence type="inferred from homology"/>
<comment type="function">
    <text evidence="1">Catalyzes the synthesis of GMP from XMP.</text>
</comment>
<comment type="catalytic activity">
    <reaction evidence="1">
        <text>XMP + L-glutamine + ATP + H2O = GMP + L-glutamate + AMP + diphosphate + 2 H(+)</text>
        <dbReference type="Rhea" id="RHEA:11680"/>
        <dbReference type="ChEBI" id="CHEBI:15377"/>
        <dbReference type="ChEBI" id="CHEBI:15378"/>
        <dbReference type="ChEBI" id="CHEBI:29985"/>
        <dbReference type="ChEBI" id="CHEBI:30616"/>
        <dbReference type="ChEBI" id="CHEBI:33019"/>
        <dbReference type="ChEBI" id="CHEBI:57464"/>
        <dbReference type="ChEBI" id="CHEBI:58115"/>
        <dbReference type="ChEBI" id="CHEBI:58359"/>
        <dbReference type="ChEBI" id="CHEBI:456215"/>
        <dbReference type="EC" id="6.3.5.2"/>
    </reaction>
</comment>
<comment type="pathway">
    <text evidence="1">Purine metabolism; GMP biosynthesis; GMP from XMP (L-Gln route): step 1/1.</text>
</comment>
<comment type="subunit">
    <text evidence="1">Homodimer.</text>
</comment>
<evidence type="ECO:0000255" key="1">
    <source>
        <dbReference type="HAMAP-Rule" id="MF_00344"/>
    </source>
</evidence>
<keyword id="KW-0067">ATP-binding</keyword>
<keyword id="KW-0315">Glutamine amidotransferase</keyword>
<keyword id="KW-0332">GMP biosynthesis</keyword>
<keyword id="KW-0436">Ligase</keyword>
<keyword id="KW-0547">Nucleotide-binding</keyword>
<keyword id="KW-0658">Purine biosynthesis</keyword>
<keyword id="KW-1185">Reference proteome</keyword>
<gene>
    <name evidence="1" type="primary">guaA</name>
    <name type="ordered locus">Sden_1270</name>
</gene>
<protein>
    <recommendedName>
        <fullName evidence="1">GMP synthase [glutamine-hydrolyzing]</fullName>
        <ecNumber evidence="1">6.3.5.2</ecNumber>
    </recommendedName>
    <alternativeName>
        <fullName evidence="1">GMP synthetase</fullName>
    </alternativeName>
    <alternativeName>
        <fullName evidence="1">Glutamine amidotransferase</fullName>
    </alternativeName>
</protein>
<reference key="1">
    <citation type="submission" date="2006-03" db="EMBL/GenBank/DDBJ databases">
        <title>Complete sequence of Shewanella denitrificans OS217.</title>
        <authorList>
            <consortium name="US DOE Joint Genome Institute"/>
            <person name="Copeland A."/>
            <person name="Lucas S."/>
            <person name="Lapidus A."/>
            <person name="Barry K."/>
            <person name="Detter J.C."/>
            <person name="Glavina del Rio T."/>
            <person name="Hammon N."/>
            <person name="Israni S."/>
            <person name="Dalin E."/>
            <person name="Tice H."/>
            <person name="Pitluck S."/>
            <person name="Brettin T."/>
            <person name="Bruce D."/>
            <person name="Han C."/>
            <person name="Tapia R."/>
            <person name="Gilna P."/>
            <person name="Kiss H."/>
            <person name="Schmutz J."/>
            <person name="Larimer F."/>
            <person name="Land M."/>
            <person name="Hauser L."/>
            <person name="Kyrpides N."/>
            <person name="Lykidis A."/>
            <person name="Richardson P."/>
        </authorList>
    </citation>
    <scope>NUCLEOTIDE SEQUENCE [LARGE SCALE GENOMIC DNA]</scope>
    <source>
        <strain>OS217 / ATCC BAA-1090 / DSM 15013</strain>
    </source>
</reference>
<name>GUAA_SHEDO</name>
<accession>Q12PS0</accession>
<feature type="chain" id="PRO_1000120401" description="GMP synthase [glutamine-hydrolyzing]">
    <location>
        <begin position="1"/>
        <end position="525"/>
    </location>
</feature>
<feature type="domain" description="Glutamine amidotransferase type-1" evidence="1">
    <location>
        <begin position="8"/>
        <end position="207"/>
    </location>
</feature>
<feature type="domain" description="GMPS ATP-PPase" evidence="1">
    <location>
        <begin position="208"/>
        <end position="400"/>
    </location>
</feature>
<feature type="active site" description="Nucleophile" evidence="1">
    <location>
        <position position="85"/>
    </location>
</feature>
<feature type="active site" evidence="1">
    <location>
        <position position="181"/>
    </location>
</feature>
<feature type="active site" evidence="1">
    <location>
        <position position="183"/>
    </location>
</feature>
<feature type="binding site" evidence="1">
    <location>
        <begin position="235"/>
        <end position="241"/>
    </location>
    <ligand>
        <name>ATP</name>
        <dbReference type="ChEBI" id="CHEBI:30616"/>
    </ligand>
</feature>
<dbReference type="EC" id="6.3.5.2" evidence="1"/>
<dbReference type="EMBL" id="CP000302">
    <property type="protein sequence ID" value="ABE54556.1"/>
    <property type="molecule type" value="Genomic_DNA"/>
</dbReference>
<dbReference type="RefSeq" id="WP_011495715.1">
    <property type="nucleotide sequence ID" value="NC_007954.1"/>
</dbReference>
<dbReference type="SMR" id="Q12PS0"/>
<dbReference type="STRING" id="318161.Sden_1270"/>
<dbReference type="MEROPS" id="C26.A07"/>
<dbReference type="KEGG" id="sdn:Sden_1270"/>
<dbReference type="eggNOG" id="COG0518">
    <property type="taxonomic scope" value="Bacteria"/>
</dbReference>
<dbReference type="eggNOG" id="COG0519">
    <property type="taxonomic scope" value="Bacteria"/>
</dbReference>
<dbReference type="HOGENOM" id="CLU_014340_0_5_6"/>
<dbReference type="OrthoDB" id="9802219at2"/>
<dbReference type="UniPathway" id="UPA00189">
    <property type="reaction ID" value="UER00296"/>
</dbReference>
<dbReference type="Proteomes" id="UP000001982">
    <property type="component" value="Chromosome"/>
</dbReference>
<dbReference type="GO" id="GO:0005829">
    <property type="term" value="C:cytosol"/>
    <property type="evidence" value="ECO:0007669"/>
    <property type="project" value="TreeGrafter"/>
</dbReference>
<dbReference type="GO" id="GO:0005524">
    <property type="term" value="F:ATP binding"/>
    <property type="evidence" value="ECO:0007669"/>
    <property type="project" value="UniProtKB-UniRule"/>
</dbReference>
<dbReference type="GO" id="GO:0003921">
    <property type="term" value="F:GMP synthase activity"/>
    <property type="evidence" value="ECO:0007669"/>
    <property type="project" value="InterPro"/>
</dbReference>
<dbReference type="CDD" id="cd01742">
    <property type="entry name" value="GATase1_GMP_Synthase"/>
    <property type="match status" value="1"/>
</dbReference>
<dbReference type="CDD" id="cd01997">
    <property type="entry name" value="GMP_synthase_C"/>
    <property type="match status" value="1"/>
</dbReference>
<dbReference type="FunFam" id="3.30.300.10:FF:000002">
    <property type="entry name" value="GMP synthase [glutamine-hydrolyzing]"/>
    <property type="match status" value="1"/>
</dbReference>
<dbReference type="FunFam" id="3.40.50.620:FF:000001">
    <property type="entry name" value="GMP synthase [glutamine-hydrolyzing]"/>
    <property type="match status" value="1"/>
</dbReference>
<dbReference type="FunFam" id="3.40.50.880:FF:000001">
    <property type="entry name" value="GMP synthase [glutamine-hydrolyzing]"/>
    <property type="match status" value="1"/>
</dbReference>
<dbReference type="Gene3D" id="3.30.300.10">
    <property type="match status" value="1"/>
</dbReference>
<dbReference type="Gene3D" id="3.40.50.880">
    <property type="match status" value="1"/>
</dbReference>
<dbReference type="Gene3D" id="3.40.50.620">
    <property type="entry name" value="HUPs"/>
    <property type="match status" value="1"/>
</dbReference>
<dbReference type="HAMAP" id="MF_00344">
    <property type="entry name" value="GMP_synthase"/>
    <property type="match status" value="1"/>
</dbReference>
<dbReference type="InterPro" id="IPR029062">
    <property type="entry name" value="Class_I_gatase-like"/>
</dbReference>
<dbReference type="InterPro" id="IPR017926">
    <property type="entry name" value="GATASE"/>
</dbReference>
<dbReference type="InterPro" id="IPR001674">
    <property type="entry name" value="GMP_synth_C"/>
</dbReference>
<dbReference type="InterPro" id="IPR004739">
    <property type="entry name" value="GMP_synth_GATase"/>
</dbReference>
<dbReference type="InterPro" id="IPR022955">
    <property type="entry name" value="GMP_synthase"/>
</dbReference>
<dbReference type="InterPro" id="IPR025777">
    <property type="entry name" value="GMPS_ATP_PPase_dom"/>
</dbReference>
<dbReference type="InterPro" id="IPR022310">
    <property type="entry name" value="NAD/GMP_synthase"/>
</dbReference>
<dbReference type="InterPro" id="IPR014729">
    <property type="entry name" value="Rossmann-like_a/b/a_fold"/>
</dbReference>
<dbReference type="NCBIfam" id="TIGR00884">
    <property type="entry name" value="guaA_Cterm"/>
    <property type="match status" value="1"/>
</dbReference>
<dbReference type="NCBIfam" id="TIGR00888">
    <property type="entry name" value="guaA_Nterm"/>
    <property type="match status" value="1"/>
</dbReference>
<dbReference type="NCBIfam" id="NF000848">
    <property type="entry name" value="PRK00074.1"/>
    <property type="match status" value="1"/>
</dbReference>
<dbReference type="PANTHER" id="PTHR11922:SF2">
    <property type="entry name" value="GMP SYNTHASE [GLUTAMINE-HYDROLYZING]"/>
    <property type="match status" value="1"/>
</dbReference>
<dbReference type="PANTHER" id="PTHR11922">
    <property type="entry name" value="GMP SYNTHASE-RELATED"/>
    <property type="match status" value="1"/>
</dbReference>
<dbReference type="Pfam" id="PF00117">
    <property type="entry name" value="GATase"/>
    <property type="match status" value="1"/>
</dbReference>
<dbReference type="Pfam" id="PF00958">
    <property type="entry name" value="GMP_synt_C"/>
    <property type="match status" value="1"/>
</dbReference>
<dbReference type="Pfam" id="PF02540">
    <property type="entry name" value="NAD_synthase"/>
    <property type="match status" value="1"/>
</dbReference>
<dbReference type="PRINTS" id="PR00097">
    <property type="entry name" value="ANTSNTHASEII"/>
</dbReference>
<dbReference type="PRINTS" id="PR00096">
    <property type="entry name" value="GATASE"/>
</dbReference>
<dbReference type="SUPFAM" id="SSF52402">
    <property type="entry name" value="Adenine nucleotide alpha hydrolases-like"/>
    <property type="match status" value="1"/>
</dbReference>
<dbReference type="SUPFAM" id="SSF52317">
    <property type="entry name" value="Class I glutamine amidotransferase-like"/>
    <property type="match status" value="1"/>
</dbReference>
<dbReference type="SUPFAM" id="SSF54810">
    <property type="entry name" value="GMP synthetase C-terminal dimerisation domain"/>
    <property type="match status" value="1"/>
</dbReference>
<dbReference type="PROSITE" id="PS51273">
    <property type="entry name" value="GATASE_TYPE_1"/>
    <property type="match status" value="1"/>
</dbReference>
<dbReference type="PROSITE" id="PS51553">
    <property type="entry name" value="GMPS_ATP_PPASE"/>
    <property type="match status" value="1"/>
</dbReference>